<name>CAH1_MACNE</name>
<proteinExistence type="evidence at transcript level"/>
<evidence type="ECO:0000250" key="1">
    <source>
        <dbReference type="UniProtKB" id="B0BNN3"/>
    </source>
</evidence>
<evidence type="ECO:0000250" key="2">
    <source>
        <dbReference type="UniProtKB" id="P00915"/>
    </source>
</evidence>
<evidence type="ECO:0000250" key="3">
    <source>
        <dbReference type="UniProtKB" id="P00918"/>
    </source>
</evidence>
<evidence type="ECO:0000255" key="4">
    <source>
        <dbReference type="PROSITE-ProRule" id="PRU01134"/>
    </source>
</evidence>
<evidence type="ECO:0000256" key="5">
    <source>
        <dbReference type="SAM" id="MobiDB-lite"/>
    </source>
</evidence>
<evidence type="ECO:0000305" key="6"/>
<evidence type="ECO:0000305" key="7">
    <source>
    </source>
</evidence>
<sequence length="261" mass="28938">MASPDWGYDDKNGPEQWSKLYPIANGNNQSPVDIKTSEAKHDTSLKPISVSYNPATAKEIINVGHSFHVNFEDNDNRSVLKGGPFSDSYRLFQFHFHWGSSNEYGSEHTVDGVKYSSELHIVHWNSAKYSSLAEAVSKADGLAVIGVLMKVGEANPKLQKVLDALHAIKTKGKRAPFTNFDPSTLLPSSLDFWTYSGSLTHPPLYESVTWIICKESISVSSEQLAQFRSLLSNVEGDNPVPSQRNNRPTQPLKGRTVRASF</sequence>
<gene>
    <name type="primary">CA1</name>
</gene>
<comment type="function">
    <text evidence="2">Catalyzes the reversible hydration of carbon dioxide. Can hydrate cyanamide to urea.</text>
</comment>
<comment type="catalytic activity">
    <reaction evidence="2">
        <text>hydrogencarbonate + H(+) = CO2 + H2O</text>
        <dbReference type="Rhea" id="RHEA:10748"/>
        <dbReference type="ChEBI" id="CHEBI:15377"/>
        <dbReference type="ChEBI" id="CHEBI:15378"/>
        <dbReference type="ChEBI" id="CHEBI:16526"/>
        <dbReference type="ChEBI" id="CHEBI:17544"/>
        <dbReference type="EC" id="4.2.1.1"/>
    </reaction>
</comment>
<comment type="catalytic activity">
    <reaction evidence="2">
        <text>urea = cyanamide + H2O</text>
        <dbReference type="Rhea" id="RHEA:23056"/>
        <dbReference type="ChEBI" id="CHEBI:15377"/>
        <dbReference type="ChEBI" id="CHEBI:16199"/>
        <dbReference type="ChEBI" id="CHEBI:16698"/>
        <dbReference type="EC" id="4.2.1.69"/>
    </reaction>
</comment>
<comment type="cofactor">
    <cofactor evidence="2">
        <name>Zn(2+)</name>
        <dbReference type="ChEBI" id="CHEBI:29105"/>
    </cofactor>
</comment>
<comment type="activity regulation">
    <text evidence="2">Inhibited by acetazolamide.</text>
</comment>
<comment type="subcellular location">
    <subcellularLocation>
        <location evidence="1">Cytoplasm</location>
    </subcellularLocation>
</comment>
<comment type="polymorphism">
    <text evidence="7">Four electrophoretic alleles are know to exist, they are designated A (shown here), B, C and D.</text>
</comment>
<comment type="similarity">
    <text evidence="6">Belongs to the alpha-carbonic anhydrase family.</text>
</comment>
<protein>
    <recommendedName>
        <fullName>Carbonic anhydrase 1</fullName>
        <ecNumber evidence="2">4.2.1.1</ecNumber>
    </recommendedName>
    <alternativeName>
        <fullName>Carbonate dehydratase I</fullName>
    </alternativeName>
    <alternativeName>
        <fullName>Carbonic anhydrase I</fullName>
        <shortName>CA-I</shortName>
    </alternativeName>
    <alternativeName>
        <fullName>Cyanamide hydratase CA1</fullName>
        <ecNumber evidence="2">4.2.1.69</ecNumber>
    </alternativeName>
</protein>
<reference key="1">
    <citation type="journal article" date="1995" name="Gene">
        <title>Characterization of the gene encoding carbonic anhydrase I from the pigtail macaque.</title>
        <authorList>
            <person name="Hopkins P.J."/>
            <person name="Bergenhem N.C.H."/>
            <person name="Venta P.J."/>
            <person name="Hewett-Emmett D."/>
            <person name="Tashian R.E."/>
        </authorList>
    </citation>
    <scope>NUCLEOTIDE SEQUENCE [MRNA]</scope>
    <scope>POLYMORPHISM</scope>
</reference>
<feature type="initiator methionine" description="Removed" evidence="2">
    <location>
        <position position="1"/>
    </location>
</feature>
<feature type="chain" id="PRO_0000077411" description="Carbonic anhydrase 1">
    <location>
        <begin position="2"/>
        <end position="261"/>
    </location>
</feature>
<feature type="domain" description="Alpha-carbonic anhydrase" evidence="4">
    <location>
        <begin position="4"/>
        <end position="261"/>
    </location>
</feature>
<feature type="region of interest" description="Disordered" evidence="5">
    <location>
        <begin position="235"/>
        <end position="261"/>
    </location>
</feature>
<feature type="compositionally biased region" description="Polar residues" evidence="5">
    <location>
        <begin position="240"/>
        <end position="249"/>
    </location>
</feature>
<feature type="active site" description="Proton donor/acceptor" evidence="3">
    <location>
        <position position="65"/>
    </location>
</feature>
<feature type="binding site" evidence="2">
    <location>
        <position position="95"/>
    </location>
    <ligand>
        <name>Zn(2+)</name>
        <dbReference type="ChEBI" id="CHEBI:29105"/>
        <note>catalytic</note>
    </ligand>
</feature>
<feature type="binding site" evidence="2">
    <location>
        <position position="97"/>
    </location>
    <ligand>
        <name>Zn(2+)</name>
        <dbReference type="ChEBI" id="CHEBI:29105"/>
        <note>catalytic</note>
    </ligand>
</feature>
<feature type="binding site" evidence="2">
    <location>
        <position position="120"/>
    </location>
    <ligand>
        <name>Zn(2+)</name>
        <dbReference type="ChEBI" id="CHEBI:29105"/>
        <note>catalytic</note>
    </ligand>
</feature>
<feature type="binding site" evidence="3">
    <location>
        <begin position="200"/>
        <end position="201"/>
    </location>
    <ligand>
        <name>substrate</name>
    </ligand>
</feature>
<feature type="binding site" evidence="2">
    <location>
        <position position="200"/>
    </location>
    <ligand>
        <name>substrate</name>
    </ligand>
</feature>
<feature type="modified residue" description="N-acetylalanine" evidence="2">
    <location>
        <position position="2"/>
    </location>
</feature>
<feature type="sequence variant" description="In allele B.">
    <original>SQ</original>
    <variation>IE</variation>
    <location>
        <begin position="242"/>
        <end position="243"/>
    </location>
</feature>
<keyword id="KW-0007">Acetylation</keyword>
<keyword id="KW-0963">Cytoplasm</keyword>
<keyword id="KW-0456">Lyase</keyword>
<keyword id="KW-0479">Metal-binding</keyword>
<keyword id="KW-1185">Reference proteome</keyword>
<keyword id="KW-0862">Zinc</keyword>
<accession>P35217</accession>
<dbReference type="EC" id="4.2.1.1" evidence="2"/>
<dbReference type="EC" id="4.2.1.69" evidence="2"/>
<dbReference type="EMBL" id="L25082">
    <property type="protein sequence ID" value="AAA65198.1"/>
    <property type="molecule type" value="mRNA"/>
</dbReference>
<dbReference type="RefSeq" id="NP_001292820.1">
    <property type="nucleotide sequence ID" value="NM_001305891.1"/>
</dbReference>
<dbReference type="RefSeq" id="XP_011731824.2">
    <property type="nucleotide sequence ID" value="XM_011733522.2"/>
</dbReference>
<dbReference type="SMR" id="P35217"/>
<dbReference type="STRING" id="9545.ENSMNEP00000031161"/>
<dbReference type="GeneID" id="105477139"/>
<dbReference type="KEGG" id="mni:105477139"/>
<dbReference type="CTD" id="759"/>
<dbReference type="Proteomes" id="UP000233120">
    <property type="component" value="Unassembled WGS sequence"/>
</dbReference>
<dbReference type="GO" id="GO:0005737">
    <property type="term" value="C:cytoplasm"/>
    <property type="evidence" value="ECO:0007669"/>
    <property type="project" value="UniProtKB-SubCell"/>
</dbReference>
<dbReference type="GO" id="GO:0004089">
    <property type="term" value="F:carbonate dehydratase activity"/>
    <property type="evidence" value="ECO:0000250"/>
    <property type="project" value="UniProtKB"/>
</dbReference>
<dbReference type="GO" id="GO:0018820">
    <property type="term" value="F:cyanamide hydratase activity"/>
    <property type="evidence" value="ECO:0000250"/>
    <property type="project" value="UniProtKB"/>
</dbReference>
<dbReference type="GO" id="GO:0008270">
    <property type="term" value="F:zinc ion binding"/>
    <property type="evidence" value="ECO:0007669"/>
    <property type="project" value="InterPro"/>
</dbReference>
<dbReference type="FunFam" id="3.10.200.10:FF:000001">
    <property type="entry name" value="Carbonic anhydrase 2"/>
    <property type="match status" value="1"/>
</dbReference>
<dbReference type="Gene3D" id="3.10.200.10">
    <property type="entry name" value="Alpha carbonic anhydrase"/>
    <property type="match status" value="1"/>
</dbReference>
<dbReference type="InterPro" id="IPR001148">
    <property type="entry name" value="CA_dom"/>
</dbReference>
<dbReference type="InterPro" id="IPR036398">
    <property type="entry name" value="CA_dom_sf"/>
</dbReference>
<dbReference type="InterPro" id="IPR023561">
    <property type="entry name" value="Carbonic_anhydrase_a-class"/>
</dbReference>
<dbReference type="InterPro" id="IPR018338">
    <property type="entry name" value="Carbonic_anhydrase_a-class_CS"/>
</dbReference>
<dbReference type="PANTHER" id="PTHR18952">
    <property type="entry name" value="CARBONIC ANHYDRASE"/>
    <property type="match status" value="1"/>
</dbReference>
<dbReference type="PANTHER" id="PTHR18952:SF282">
    <property type="entry name" value="CARBONIC ANHYDRASE 1"/>
    <property type="match status" value="1"/>
</dbReference>
<dbReference type="Pfam" id="PF00194">
    <property type="entry name" value="Carb_anhydrase"/>
    <property type="match status" value="1"/>
</dbReference>
<dbReference type="SMART" id="SM01057">
    <property type="entry name" value="Carb_anhydrase"/>
    <property type="match status" value="1"/>
</dbReference>
<dbReference type="SUPFAM" id="SSF51069">
    <property type="entry name" value="Carbonic anhydrase"/>
    <property type="match status" value="1"/>
</dbReference>
<dbReference type="PROSITE" id="PS00162">
    <property type="entry name" value="ALPHA_CA_1"/>
    <property type="match status" value="1"/>
</dbReference>
<dbReference type="PROSITE" id="PS51144">
    <property type="entry name" value="ALPHA_CA_2"/>
    <property type="match status" value="1"/>
</dbReference>
<organism>
    <name type="scientific">Macaca nemestrina</name>
    <name type="common">Pig-tailed macaque</name>
    <dbReference type="NCBI Taxonomy" id="9545"/>
    <lineage>
        <taxon>Eukaryota</taxon>
        <taxon>Metazoa</taxon>
        <taxon>Chordata</taxon>
        <taxon>Craniata</taxon>
        <taxon>Vertebrata</taxon>
        <taxon>Euteleostomi</taxon>
        <taxon>Mammalia</taxon>
        <taxon>Eutheria</taxon>
        <taxon>Euarchontoglires</taxon>
        <taxon>Primates</taxon>
        <taxon>Haplorrhini</taxon>
        <taxon>Catarrhini</taxon>
        <taxon>Cercopithecidae</taxon>
        <taxon>Cercopithecinae</taxon>
        <taxon>Macaca</taxon>
    </lineage>
</organism>